<gene>
    <name type="primary">PYRC1</name>
</gene>
<organism>
    <name type="scientific">Pyrus communis</name>
    <name type="common">Pear</name>
    <name type="synonym">Pyrus domestica</name>
    <dbReference type="NCBI Taxonomy" id="23211"/>
    <lineage>
        <taxon>Eukaryota</taxon>
        <taxon>Viridiplantae</taxon>
        <taxon>Streptophyta</taxon>
        <taxon>Embryophyta</taxon>
        <taxon>Tracheophyta</taxon>
        <taxon>Spermatophyta</taxon>
        <taxon>Magnoliopsida</taxon>
        <taxon>eudicotyledons</taxon>
        <taxon>Gunneridae</taxon>
        <taxon>Pentapetalae</taxon>
        <taxon>rosids</taxon>
        <taxon>fabids</taxon>
        <taxon>Rosales</taxon>
        <taxon>Rosaceae</taxon>
        <taxon>Amygdaloideae</taxon>
        <taxon>Maleae</taxon>
        <taxon>Pyrus</taxon>
    </lineage>
</organism>
<comment type="allergen">
    <text>Causes an allergic reaction in human.</text>
</comment>
<comment type="similarity">
    <text evidence="1">Belongs to the BetVI family.</text>
</comment>
<accession>O65200</accession>
<dbReference type="EMBL" id="AF057030">
    <property type="protein sequence ID" value="AAC13315.1"/>
    <property type="molecule type" value="mRNA"/>
</dbReference>
<dbReference type="SMR" id="O65200"/>
<dbReference type="Allergome" id="3457">
    <property type="allergen name" value="Pyr c 1.0101"/>
</dbReference>
<dbReference type="Allergome" id="607">
    <property type="allergen name" value="Pyr c 1"/>
</dbReference>
<dbReference type="GO" id="GO:0005737">
    <property type="term" value="C:cytoplasm"/>
    <property type="evidence" value="ECO:0007669"/>
    <property type="project" value="TreeGrafter"/>
</dbReference>
<dbReference type="GO" id="GO:0005634">
    <property type="term" value="C:nucleus"/>
    <property type="evidence" value="ECO:0007669"/>
    <property type="project" value="TreeGrafter"/>
</dbReference>
<dbReference type="GO" id="GO:0010427">
    <property type="term" value="F:abscisic acid binding"/>
    <property type="evidence" value="ECO:0007669"/>
    <property type="project" value="InterPro"/>
</dbReference>
<dbReference type="GO" id="GO:0004864">
    <property type="term" value="F:protein phosphatase inhibitor activity"/>
    <property type="evidence" value="ECO:0007669"/>
    <property type="project" value="InterPro"/>
</dbReference>
<dbReference type="GO" id="GO:0038023">
    <property type="term" value="F:signaling receptor activity"/>
    <property type="evidence" value="ECO:0007669"/>
    <property type="project" value="InterPro"/>
</dbReference>
<dbReference type="GO" id="GO:0009738">
    <property type="term" value="P:abscisic acid-activated signaling pathway"/>
    <property type="evidence" value="ECO:0007669"/>
    <property type="project" value="InterPro"/>
</dbReference>
<dbReference type="GO" id="GO:0006952">
    <property type="term" value="P:defense response"/>
    <property type="evidence" value="ECO:0007669"/>
    <property type="project" value="UniProtKB-KW"/>
</dbReference>
<dbReference type="CDD" id="cd07816">
    <property type="entry name" value="Bet_v1-like"/>
    <property type="match status" value="1"/>
</dbReference>
<dbReference type="FunFam" id="3.30.530.20:FF:000007">
    <property type="entry name" value="Major pollen allergen Bet v 1-A"/>
    <property type="match status" value="1"/>
</dbReference>
<dbReference type="Gene3D" id="3.30.530.20">
    <property type="match status" value="1"/>
</dbReference>
<dbReference type="InterPro" id="IPR000916">
    <property type="entry name" value="Bet_v_I/MLP"/>
</dbReference>
<dbReference type="InterPro" id="IPR024949">
    <property type="entry name" value="Bet_v_I_allergen"/>
</dbReference>
<dbReference type="InterPro" id="IPR050279">
    <property type="entry name" value="Plant_def-hormone_signal"/>
</dbReference>
<dbReference type="InterPro" id="IPR023393">
    <property type="entry name" value="START-like_dom_sf"/>
</dbReference>
<dbReference type="PANTHER" id="PTHR31213">
    <property type="entry name" value="OS08G0374000 PROTEIN-RELATED"/>
    <property type="match status" value="1"/>
</dbReference>
<dbReference type="PANTHER" id="PTHR31213:SF55">
    <property type="entry name" value="STRESS-INDUCED PROTEIN SAM22"/>
    <property type="match status" value="1"/>
</dbReference>
<dbReference type="Pfam" id="PF00407">
    <property type="entry name" value="Bet_v_1"/>
    <property type="match status" value="1"/>
</dbReference>
<dbReference type="PRINTS" id="PR00634">
    <property type="entry name" value="BETALLERGEN"/>
</dbReference>
<dbReference type="SUPFAM" id="SSF55961">
    <property type="entry name" value="Bet v1-like"/>
    <property type="match status" value="1"/>
</dbReference>
<dbReference type="PROSITE" id="PS00451">
    <property type="entry name" value="PATHOGENESIS_BETVI"/>
    <property type="match status" value="1"/>
</dbReference>
<proteinExistence type="evidence at protein level"/>
<reference key="1">
    <citation type="journal article" date="2001" name="J. Chromatogr. B">
        <title>Pyr c 1, the major allergen from pear (Pyrus communis), is a new member of the Bet v 1 allergen family.</title>
        <authorList>
            <person name="Karamloo F."/>
            <person name="Scheurer S."/>
            <person name="Wangorsch A."/>
            <person name="May S."/>
            <person name="Haustein D."/>
            <person name="Vieths S."/>
        </authorList>
    </citation>
    <scope>NUCLEOTIDE SEQUENCE [MRNA]</scope>
    <source>
        <strain>cv. Williams</strain>
    </source>
</reference>
<name>PYRC1_PYRCO</name>
<evidence type="ECO:0000305" key="1"/>
<keyword id="KW-0020">Allergen</keyword>
<keyword id="KW-0568">Pathogenesis-related protein</keyword>
<keyword id="KW-0611">Plant defense</keyword>
<protein>
    <recommendedName>
        <fullName>Major allergen Pyr c 1</fullName>
    </recommendedName>
    <allergenName>Pyr c 1</allergenName>
</protein>
<sequence>MGLYTFENEFTSEIPPPRLFKAFVLDADNLIPKIAPQAIKHAEILEGNGGPGTIKKITFGEGSQYGYVKHRVDSIDEASYSYAYTLIEGDALTDTIEKISYEAKLVASGSGSTIKSISHYHTKGDIEIKEEHVKAGKEKAHGLFKLIESYLKDHPDAYN</sequence>
<feature type="chain" id="PRO_0000154203" description="Major allergen Pyr c 1">
    <location>
        <begin position="1"/>
        <end position="159"/>
    </location>
</feature>